<organism>
    <name type="scientific">Mus musculus</name>
    <name type="common">Mouse</name>
    <dbReference type="NCBI Taxonomy" id="10090"/>
    <lineage>
        <taxon>Eukaryota</taxon>
        <taxon>Metazoa</taxon>
        <taxon>Chordata</taxon>
        <taxon>Craniata</taxon>
        <taxon>Vertebrata</taxon>
        <taxon>Euteleostomi</taxon>
        <taxon>Mammalia</taxon>
        <taxon>Eutheria</taxon>
        <taxon>Euarchontoglires</taxon>
        <taxon>Glires</taxon>
        <taxon>Rodentia</taxon>
        <taxon>Myomorpha</taxon>
        <taxon>Muroidea</taxon>
        <taxon>Muridae</taxon>
        <taxon>Murinae</taxon>
        <taxon>Mus</taxon>
        <taxon>Mus</taxon>
    </lineage>
</organism>
<proteinExistence type="evidence at protein level"/>
<sequence length="698" mass="78347">MPEEASLPPAKRFRPGSCPPGRRVVMLLTAGGGGGAGGGRRQTPPLAQPSASPYREALELQRRSLPIFRARGQLLAQLRNLDNAVLIGETGSGKTTQIPQYLYEGGISRQGIIAVTQPRRVAAISLATRVSDEKRTELGKLVGYTVRFEDVTSEDTRIKFLTDGMLLREAISDSLLRKYSCVILDEAHERTIHTDVLFGVVKTAQKRRKELGKLPLKVIVMSATMDVDLFSQYFNRAPVLYLEGRQHPIQIFYTKQPQQDYLHAALVSVFQIHQEAPASQDILVFLTGQEEIEAMSKTCRDIARHLPDGCPSMLVLPLYASLPYSQQLRVFQGAPKGYRKVIISTNIAETSITITGIKYVVDTGMVKAKKYNPDSGLEVLAVQRVSKTQAWQRTGRAGREDSGICYRLYTEDEFEKFEKMTVPEIQRCNLASVILQLLAMKVPNVLTFDFMSKPSPDHIEAAIAQLDLLGALEHKDDQLTLTPIGRKMAAFPLEPRFAKTILLSSKFHCTEEILTIVSLLSVDSVLYNPPARRDEVQSVRKKFISSEGDHITLLNIYRTFKNIGGNKDWCKENFVNSKNMLLVAEVRAQLREICLKMSMPIMSSRGDMESVRRCMAHSLFMNTAELQTDGTYATTDTHQPVAIHPSSVLFHCKPACVVYTSLLYTNKCYMRDLCVVDAEWLYEAAPDYFRRKLRTARN</sequence>
<keyword id="KW-0067">ATP-binding</keyword>
<keyword id="KW-0963">Cytoplasm</keyword>
<keyword id="KW-0347">Helicase</keyword>
<keyword id="KW-0378">Hydrolase</keyword>
<keyword id="KW-1271">Inflammasome</keyword>
<keyword id="KW-0547">Nucleotide-binding</keyword>
<keyword id="KW-0539">Nucleus</keyword>
<keyword id="KW-1185">Reference proteome</keyword>
<keyword id="KW-0694">RNA-binding</keyword>
<keyword id="KW-0832">Ubl conjugation</keyword>
<gene>
    <name evidence="10" type="primary">Dhx33</name>
</gene>
<evidence type="ECO:0000250" key="1">
    <source>
        <dbReference type="UniProtKB" id="Q9H6R0"/>
    </source>
</evidence>
<evidence type="ECO:0000255" key="2">
    <source>
        <dbReference type="PROSITE-ProRule" id="PRU00541"/>
    </source>
</evidence>
<evidence type="ECO:0000255" key="3">
    <source>
        <dbReference type="PROSITE-ProRule" id="PRU00542"/>
    </source>
</evidence>
<evidence type="ECO:0000256" key="4">
    <source>
        <dbReference type="SAM" id="MobiDB-lite"/>
    </source>
</evidence>
<evidence type="ECO:0000269" key="5">
    <source>
    </source>
</evidence>
<evidence type="ECO:0000269" key="6">
    <source>
    </source>
</evidence>
<evidence type="ECO:0000269" key="7">
    <source>
    </source>
</evidence>
<evidence type="ECO:0000269" key="8">
    <source>
    </source>
</evidence>
<evidence type="ECO:0000305" key="9"/>
<evidence type="ECO:0000312" key="10">
    <source>
        <dbReference type="MGI" id="MGI:2445102"/>
    </source>
</evidence>
<dbReference type="EC" id="3.6.4.13"/>
<dbReference type="EMBL" id="AK035177">
    <property type="protein sequence ID" value="BAC28969.1"/>
    <property type="molecule type" value="mRNA"/>
</dbReference>
<dbReference type="EMBL" id="BC052172">
    <property type="protein sequence ID" value="AAH52172.1"/>
    <property type="molecule type" value="mRNA"/>
</dbReference>
<dbReference type="CCDS" id="CCDS24971.1"/>
<dbReference type="RefSeq" id="NP_848144.3">
    <property type="nucleotide sequence ID" value="NM_178367.4"/>
</dbReference>
<dbReference type="SMR" id="Q80VY9"/>
<dbReference type="BioGRID" id="229816">
    <property type="interactions" value="5"/>
</dbReference>
<dbReference type="FunCoup" id="Q80VY9">
    <property type="interactions" value="3129"/>
</dbReference>
<dbReference type="STRING" id="10090.ENSMUSP00000104167"/>
<dbReference type="BindingDB" id="Q80VY9"/>
<dbReference type="ChEMBL" id="CHEMBL5465267"/>
<dbReference type="iPTMnet" id="Q80VY9"/>
<dbReference type="PhosphoSitePlus" id="Q80VY9"/>
<dbReference type="jPOST" id="Q80VY9"/>
<dbReference type="PaxDb" id="10090-ENSMUSP00000104167"/>
<dbReference type="PeptideAtlas" id="Q80VY9"/>
<dbReference type="ProteomicsDB" id="279531"/>
<dbReference type="Pumba" id="Q80VY9"/>
<dbReference type="Antibodypedia" id="23699">
    <property type="antibodies" value="73 antibodies from 11 providers"/>
</dbReference>
<dbReference type="DNASU" id="216877"/>
<dbReference type="Ensembl" id="ENSMUST00000108527.8">
    <property type="protein sequence ID" value="ENSMUSP00000104167.2"/>
    <property type="gene ID" value="ENSMUSG00000040620.16"/>
</dbReference>
<dbReference type="GeneID" id="216877"/>
<dbReference type="KEGG" id="mmu:216877"/>
<dbReference type="UCSC" id="uc007jxg.1">
    <property type="organism name" value="mouse"/>
</dbReference>
<dbReference type="AGR" id="MGI:2445102"/>
<dbReference type="CTD" id="56919"/>
<dbReference type="MGI" id="MGI:2445102">
    <property type="gene designation" value="Dhx33"/>
</dbReference>
<dbReference type="VEuPathDB" id="HostDB:ENSMUSG00000040620"/>
<dbReference type="eggNOG" id="KOG0922">
    <property type="taxonomic scope" value="Eukaryota"/>
</dbReference>
<dbReference type="GeneTree" id="ENSGT00940000156747"/>
<dbReference type="HOGENOM" id="CLU_001832_5_11_1"/>
<dbReference type="InParanoid" id="Q80VY9"/>
<dbReference type="OMA" id="CHENFLH"/>
<dbReference type="OrthoDB" id="10253254at2759"/>
<dbReference type="PhylomeDB" id="Q80VY9"/>
<dbReference type="TreeFam" id="TF354245"/>
<dbReference type="BioGRID-ORCS" id="216877">
    <property type="hits" value="29 hits in 81 CRISPR screens"/>
</dbReference>
<dbReference type="ChiTaRS" id="Dhx33">
    <property type="organism name" value="mouse"/>
</dbReference>
<dbReference type="PRO" id="PR:Q80VY9"/>
<dbReference type="Proteomes" id="UP000000589">
    <property type="component" value="Chromosome 11"/>
</dbReference>
<dbReference type="RNAct" id="Q80VY9">
    <property type="molecule type" value="protein"/>
</dbReference>
<dbReference type="Bgee" id="ENSMUSG00000040620">
    <property type="expression patterns" value="Expressed in embryonic post-anal tail and 232 other cell types or tissues"/>
</dbReference>
<dbReference type="ExpressionAtlas" id="Q80VY9">
    <property type="expression patterns" value="baseline and differential"/>
</dbReference>
<dbReference type="GO" id="GO:0005737">
    <property type="term" value="C:cytoplasm"/>
    <property type="evidence" value="ECO:0000250"/>
    <property type="project" value="UniProtKB"/>
</dbReference>
<dbReference type="GO" id="GO:0072559">
    <property type="term" value="C:NLRP3 inflammasome complex"/>
    <property type="evidence" value="ECO:0000250"/>
    <property type="project" value="UniProtKB"/>
</dbReference>
<dbReference type="GO" id="GO:0005730">
    <property type="term" value="C:nucleolus"/>
    <property type="evidence" value="ECO:0000314"/>
    <property type="project" value="UniProtKB"/>
</dbReference>
<dbReference type="GO" id="GO:0005654">
    <property type="term" value="C:nucleoplasm"/>
    <property type="evidence" value="ECO:0000314"/>
    <property type="project" value="UniProtKB"/>
</dbReference>
<dbReference type="GO" id="GO:0005634">
    <property type="term" value="C:nucleus"/>
    <property type="evidence" value="ECO:0000269"/>
    <property type="project" value="MGI"/>
</dbReference>
<dbReference type="GO" id="GO:0005524">
    <property type="term" value="F:ATP binding"/>
    <property type="evidence" value="ECO:0007669"/>
    <property type="project" value="UniProtKB-KW"/>
</dbReference>
<dbReference type="GO" id="GO:0016887">
    <property type="term" value="F:ATP hydrolysis activity"/>
    <property type="evidence" value="ECO:0007669"/>
    <property type="project" value="RHEA"/>
</dbReference>
<dbReference type="GO" id="GO:0140297">
    <property type="term" value="F:DNA-binding transcription factor binding"/>
    <property type="evidence" value="ECO:0000353"/>
    <property type="project" value="UniProtKB"/>
</dbReference>
<dbReference type="GO" id="GO:0003725">
    <property type="term" value="F:double-stranded RNA binding"/>
    <property type="evidence" value="ECO:0000314"/>
    <property type="project" value="UniProtKB"/>
</dbReference>
<dbReference type="GO" id="GO:0003729">
    <property type="term" value="F:mRNA binding"/>
    <property type="evidence" value="ECO:0000250"/>
    <property type="project" value="UniProtKB"/>
</dbReference>
<dbReference type="GO" id="GO:0000182">
    <property type="term" value="F:rDNA binding"/>
    <property type="evidence" value="ECO:0000314"/>
    <property type="project" value="UniProtKB"/>
</dbReference>
<dbReference type="GO" id="GO:0043023">
    <property type="term" value="F:ribosomal large subunit binding"/>
    <property type="evidence" value="ECO:0007669"/>
    <property type="project" value="Ensembl"/>
</dbReference>
<dbReference type="GO" id="GO:0003724">
    <property type="term" value="F:RNA helicase activity"/>
    <property type="evidence" value="ECO:0007669"/>
    <property type="project" value="UniProtKB-EC"/>
</dbReference>
<dbReference type="GO" id="GO:0043410">
    <property type="term" value="P:positive regulation of MAPK cascade"/>
    <property type="evidence" value="ECO:0000315"/>
    <property type="project" value="UniProtKB"/>
</dbReference>
<dbReference type="GO" id="GO:0051092">
    <property type="term" value="P:positive regulation of NF-kappaB transcription factor activity"/>
    <property type="evidence" value="ECO:0000315"/>
    <property type="project" value="UniProtKB"/>
</dbReference>
<dbReference type="GO" id="GO:1900227">
    <property type="term" value="P:positive regulation of NLRP3 inflammasome complex assembly"/>
    <property type="evidence" value="ECO:0000250"/>
    <property type="project" value="UniProtKB"/>
</dbReference>
<dbReference type="GO" id="GO:0045943">
    <property type="term" value="P:positive regulation of transcription by RNA polymerase I"/>
    <property type="evidence" value="ECO:0000314"/>
    <property type="project" value="UniProtKB"/>
</dbReference>
<dbReference type="GO" id="GO:0032481">
    <property type="term" value="P:positive regulation of type I interferon production"/>
    <property type="evidence" value="ECO:0000315"/>
    <property type="project" value="UniProtKB"/>
</dbReference>
<dbReference type="GO" id="GO:0006413">
    <property type="term" value="P:translational initiation"/>
    <property type="evidence" value="ECO:0000314"/>
    <property type="project" value="UniProtKB"/>
</dbReference>
<dbReference type="CDD" id="cd17978">
    <property type="entry name" value="DEXHc_DHX33"/>
    <property type="match status" value="1"/>
</dbReference>
<dbReference type="CDD" id="cd18791">
    <property type="entry name" value="SF2_C_RHA"/>
    <property type="match status" value="1"/>
</dbReference>
<dbReference type="FunFam" id="1.20.120.1080:FF:000037">
    <property type="entry name" value="ATP-dependent RNA helicase DHX33"/>
    <property type="match status" value="1"/>
</dbReference>
<dbReference type="FunFam" id="3.40.50.300:FF:000145">
    <property type="entry name" value="probable ATP-dependent RNA helicase DHX40"/>
    <property type="match status" value="1"/>
</dbReference>
<dbReference type="FunFam" id="3.40.50.300:FF:000750">
    <property type="entry name" value="Putative ATP-dependent RNA helicase DHX33"/>
    <property type="match status" value="1"/>
</dbReference>
<dbReference type="Gene3D" id="1.20.120.1080">
    <property type="match status" value="1"/>
</dbReference>
<dbReference type="Gene3D" id="3.40.50.300">
    <property type="entry name" value="P-loop containing nucleotide triphosphate hydrolases"/>
    <property type="match status" value="2"/>
</dbReference>
<dbReference type="InterPro" id="IPR011709">
    <property type="entry name" value="DEAD-box_helicase_OB_fold"/>
</dbReference>
<dbReference type="InterPro" id="IPR011545">
    <property type="entry name" value="DEAD/DEAH_box_helicase_dom"/>
</dbReference>
<dbReference type="InterPro" id="IPR002464">
    <property type="entry name" value="DNA/RNA_helicase_DEAH_CS"/>
</dbReference>
<dbReference type="InterPro" id="IPR048333">
    <property type="entry name" value="HA2_WH"/>
</dbReference>
<dbReference type="InterPro" id="IPR007502">
    <property type="entry name" value="Helicase-assoc_dom"/>
</dbReference>
<dbReference type="InterPro" id="IPR014001">
    <property type="entry name" value="Helicase_ATP-bd"/>
</dbReference>
<dbReference type="InterPro" id="IPR001650">
    <property type="entry name" value="Helicase_C-like"/>
</dbReference>
<dbReference type="InterPro" id="IPR027417">
    <property type="entry name" value="P-loop_NTPase"/>
</dbReference>
<dbReference type="PANTHER" id="PTHR18934">
    <property type="entry name" value="ATP-DEPENDENT RNA HELICASE"/>
    <property type="match status" value="1"/>
</dbReference>
<dbReference type="PANTHER" id="PTHR18934:SF118">
    <property type="entry name" value="ATP-DEPENDENT RNA HELICASE DHX33"/>
    <property type="match status" value="1"/>
</dbReference>
<dbReference type="Pfam" id="PF00270">
    <property type="entry name" value="DEAD"/>
    <property type="match status" value="1"/>
</dbReference>
<dbReference type="Pfam" id="PF21010">
    <property type="entry name" value="HA2_C"/>
    <property type="match status" value="1"/>
</dbReference>
<dbReference type="Pfam" id="PF04408">
    <property type="entry name" value="HA2_N"/>
    <property type="match status" value="1"/>
</dbReference>
<dbReference type="Pfam" id="PF00271">
    <property type="entry name" value="Helicase_C"/>
    <property type="match status" value="1"/>
</dbReference>
<dbReference type="Pfam" id="PF07717">
    <property type="entry name" value="OB_NTP_bind"/>
    <property type="match status" value="1"/>
</dbReference>
<dbReference type="SMART" id="SM00487">
    <property type="entry name" value="DEXDc"/>
    <property type="match status" value="1"/>
</dbReference>
<dbReference type="SMART" id="SM00847">
    <property type="entry name" value="HA2"/>
    <property type="match status" value="1"/>
</dbReference>
<dbReference type="SMART" id="SM00490">
    <property type="entry name" value="HELICc"/>
    <property type="match status" value="1"/>
</dbReference>
<dbReference type="SUPFAM" id="SSF52540">
    <property type="entry name" value="P-loop containing nucleoside triphosphate hydrolases"/>
    <property type="match status" value="1"/>
</dbReference>
<dbReference type="PROSITE" id="PS00690">
    <property type="entry name" value="DEAH_ATP_HELICASE"/>
    <property type="match status" value="1"/>
</dbReference>
<dbReference type="PROSITE" id="PS51192">
    <property type="entry name" value="HELICASE_ATP_BIND_1"/>
    <property type="match status" value="1"/>
</dbReference>
<dbReference type="PROSITE" id="PS51194">
    <property type="entry name" value="HELICASE_CTER"/>
    <property type="match status" value="1"/>
</dbReference>
<protein>
    <recommendedName>
        <fullName evidence="9">ATP-dependent RNA helicase DHX33</fullName>
        <ecNumber>3.6.4.13</ecNumber>
    </recommendedName>
    <alternativeName>
        <fullName>DEAH box protein 33</fullName>
    </alternativeName>
</protein>
<name>DHX33_MOUSE</name>
<reference key="1">
    <citation type="journal article" date="2005" name="Science">
        <title>The transcriptional landscape of the mammalian genome.</title>
        <authorList>
            <person name="Carninci P."/>
            <person name="Kasukawa T."/>
            <person name="Katayama S."/>
            <person name="Gough J."/>
            <person name="Frith M.C."/>
            <person name="Maeda N."/>
            <person name="Oyama R."/>
            <person name="Ravasi T."/>
            <person name="Lenhard B."/>
            <person name="Wells C."/>
            <person name="Kodzius R."/>
            <person name="Shimokawa K."/>
            <person name="Bajic V.B."/>
            <person name="Brenner S.E."/>
            <person name="Batalov S."/>
            <person name="Forrest A.R."/>
            <person name="Zavolan M."/>
            <person name="Davis M.J."/>
            <person name="Wilming L.G."/>
            <person name="Aidinis V."/>
            <person name="Allen J.E."/>
            <person name="Ambesi-Impiombato A."/>
            <person name="Apweiler R."/>
            <person name="Aturaliya R.N."/>
            <person name="Bailey T.L."/>
            <person name="Bansal M."/>
            <person name="Baxter L."/>
            <person name="Beisel K.W."/>
            <person name="Bersano T."/>
            <person name="Bono H."/>
            <person name="Chalk A.M."/>
            <person name="Chiu K.P."/>
            <person name="Choudhary V."/>
            <person name="Christoffels A."/>
            <person name="Clutterbuck D.R."/>
            <person name="Crowe M.L."/>
            <person name="Dalla E."/>
            <person name="Dalrymple B.P."/>
            <person name="de Bono B."/>
            <person name="Della Gatta G."/>
            <person name="di Bernardo D."/>
            <person name="Down T."/>
            <person name="Engstrom P."/>
            <person name="Fagiolini M."/>
            <person name="Faulkner G."/>
            <person name="Fletcher C.F."/>
            <person name="Fukushima T."/>
            <person name="Furuno M."/>
            <person name="Futaki S."/>
            <person name="Gariboldi M."/>
            <person name="Georgii-Hemming P."/>
            <person name="Gingeras T.R."/>
            <person name="Gojobori T."/>
            <person name="Green R.E."/>
            <person name="Gustincich S."/>
            <person name="Harbers M."/>
            <person name="Hayashi Y."/>
            <person name="Hensch T.K."/>
            <person name="Hirokawa N."/>
            <person name="Hill D."/>
            <person name="Huminiecki L."/>
            <person name="Iacono M."/>
            <person name="Ikeo K."/>
            <person name="Iwama A."/>
            <person name="Ishikawa T."/>
            <person name="Jakt M."/>
            <person name="Kanapin A."/>
            <person name="Katoh M."/>
            <person name="Kawasawa Y."/>
            <person name="Kelso J."/>
            <person name="Kitamura H."/>
            <person name="Kitano H."/>
            <person name="Kollias G."/>
            <person name="Krishnan S.P."/>
            <person name="Kruger A."/>
            <person name="Kummerfeld S.K."/>
            <person name="Kurochkin I.V."/>
            <person name="Lareau L.F."/>
            <person name="Lazarevic D."/>
            <person name="Lipovich L."/>
            <person name="Liu J."/>
            <person name="Liuni S."/>
            <person name="McWilliam S."/>
            <person name="Madan Babu M."/>
            <person name="Madera M."/>
            <person name="Marchionni L."/>
            <person name="Matsuda H."/>
            <person name="Matsuzawa S."/>
            <person name="Miki H."/>
            <person name="Mignone F."/>
            <person name="Miyake S."/>
            <person name="Morris K."/>
            <person name="Mottagui-Tabar S."/>
            <person name="Mulder N."/>
            <person name="Nakano N."/>
            <person name="Nakauchi H."/>
            <person name="Ng P."/>
            <person name="Nilsson R."/>
            <person name="Nishiguchi S."/>
            <person name="Nishikawa S."/>
            <person name="Nori F."/>
            <person name="Ohara O."/>
            <person name="Okazaki Y."/>
            <person name="Orlando V."/>
            <person name="Pang K.C."/>
            <person name="Pavan W.J."/>
            <person name="Pavesi G."/>
            <person name="Pesole G."/>
            <person name="Petrovsky N."/>
            <person name="Piazza S."/>
            <person name="Reed J."/>
            <person name="Reid J.F."/>
            <person name="Ring B.Z."/>
            <person name="Ringwald M."/>
            <person name="Rost B."/>
            <person name="Ruan Y."/>
            <person name="Salzberg S.L."/>
            <person name="Sandelin A."/>
            <person name="Schneider C."/>
            <person name="Schoenbach C."/>
            <person name="Sekiguchi K."/>
            <person name="Semple C.A."/>
            <person name="Seno S."/>
            <person name="Sessa L."/>
            <person name="Sheng Y."/>
            <person name="Shibata Y."/>
            <person name="Shimada H."/>
            <person name="Shimada K."/>
            <person name="Silva D."/>
            <person name="Sinclair B."/>
            <person name="Sperling S."/>
            <person name="Stupka E."/>
            <person name="Sugiura K."/>
            <person name="Sultana R."/>
            <person name="Takenaka Y."/>
            <person name="Taki K."/>
            <person name="Tammoja K."/>
            <person name="Tan S.L."/>
            <person name="Tang S."/>
            <person name="Taylor M.S."/>
            <person name="Tegner J."/>
            <person name="Teichmann S.A."/>
            <person name="Ueda H.R."/>
            <person name="van Nimwegen E."/>
            <person name="Verardo R."/>
            <person name="Wei C.L."/>
            <person name="Yagi K."/>
            <person name="Yamanishi H."/>
            <person name="Zabarovsky E."/>
            <person name="Zhu S."/>
            <person name="Zimmer A."/>
            <person name="Hide W."/>
            <person name="Bult C."/>
            <person name="Grimmond S.M."/>
            <person name="Teasdale R.D."/>
            <person name="Liu E.T."/>
            <person name="Brusic V."/>
            <person name="Quackenbush J."/>
            <person name="Wahlestedt C."/>
            <person name="Mattick J.S."/>
            <person name="Hume D.A."/>
            <person name="Kai C."/>
            <person name="Sasaki D."/>
            <person name="Tomaru Y."/>
            <person name="Fukuda S."/>
            <person name="Kanamori-Katayama M."/>
            <person name="Suzuki M."/>
            <person name="Aoki J."/>
            <person name="Arakawa T."/>
            <person name="Iida J."/>
            <person name="Imamura K."/>
            <person name="Itoh M."/>
            <person name="Kato T."/>
            <person name="Kawaji H."/>
            <person name="Kawagashira N."/>
            <person name="Kawashima T."/>
            <person name="Kojima M."/>
            <person name="Kondo S."/>
            <person name="Konno H."/>
            <person name="Nakano K."/>
            <person name="Ninomiya N."/>
            <person name="Nishio T."/>
            <person name="Okada M."/>
            <person name="Plessy C."/>
            <person name="Shibata K."/>
            <person name="Shiraki T."/>
            <person name="Suzuki S."/>
            <person name="Tagami M."/>
            <person name="Waki K."/>
            <person name="Watahiki A."/>
            <person name="Okamura-Oho Y."/>
            <person name="Suzuki H."/>
            <person name="Kawai J."/>
            <person name="Hayashizaki Y."/>
        </authorList>
    </citation>
    <scope>NUCLEOTIDE SEQUENCE [LARGE SCALE MRNA]</scope>
    <source>
        <strain>C57BL/6J</strain>
        <tissue>Embryo</tissue>
    </source>
</reference>
<reference key="2">
    <citation type="journal article" date="2004" name="Genome Res.">
        <title>The status, quality, and expansion of the NIH full-length cDNA project: the Mammalian Gene Collection (MGC).</title>
        <authorList>
            <consortium name="The MGC Project Team"/>
        </authorList>
    </citation>
    <scope>NUCLEOTIDE SEQUENCE [LARGE SCALE MRNA]</scope>
    <source>
        <tissue>Embryonic limb</tissue>
    </source>
</reference>
<reference key="3">
    <citation type="journal article" date="2011" name="Mol. Cell. Biol.">
        <title>Identification of DHX33 as a mediator of rRNA synthesis and cell growth.</title>
        <authorList>
            <person name="Zhang Y."/>
            <person name="Forys J.T."/>
            <person name="Miceli A.P."/>
            <person name="Gwinn A.S."/>
            <person name="Weber J.D."/>
        </authorList>
    </citation>
    <scope>FUNCTION</scope>
    <scope>INTERACTION WITH UBTF</scope>
    <scope>SUBCELLULAR LOCATION</scope>
    <scope>MUTAGENESIS OF LYS-94</scope>
</reference>
<reference key="4">
    <citation type="journal article" date="2014" name="Cell. Mol. Immunol.">
        <title>The interaction between the helicase DHX33 and IPS-1 as a novel pathway to sense double-stranded RNA and RNA viruses in myeloid dendritic cells.</title>
        <authorList>
            <person name="Liu Y."/>
            <person name="Lu N."/>
            <person name="Yuan B."/>
            <person name="Weng L."/>
            <person name="Wang F."/>
            <person name="Liu Y.J."/>
            <person name="Zhang Z."/>
        </authorList>
    </citation>
    <scope>FUNCTION</scope>
    <scope>DOUBLE-STRANDED RNA-BINDING</scope>
    <scope>INTERACTION WITH MAVS</scope>
</reference>
<reference key="5">
    <citation type="journal article" date="2015" name="Mol. Cell. Biol.">
        <title>The DHX33 RNA Helicase Promotes mRNA Translation Initiation.</title>
        <authorList>
            <person name="Zhang Y."/>
            <person name="You J."/>
            <person name="Wang X."/>
            <person name="Weber J."/>
        </authorList>
    </citation>
    <scope>FUNCTION</scope>
    <scope>MUTAGENESIS OF LYS-94</scope>
    <scope>INTERACTION WITH DDX3X; EIF3G; EIF3H; RPL3; RPL7; RPL26 AND RPL27</scope>
</reference>
<reference key="6">
    <citation type="journal article" date="2018" name="J. Biol. Chem.">
        <title>Loss of the deubiquitinase USP36 destabilizes the RNA helicase DHX33 and causes preimplantation lethality in mice.</title>
        <authorList>
            <person name="Fraile J.M."/>
            <person name="Campos-Iglesias D."/>
            <person name="Rodriguez F."/>
            <person name="Astudillo A."/>
            <person name="Vilarrasa-Blasi R."/>
            <person name="Verdaguer-Dot N."/>
            <person name="Prado M.A."/>
            <person name="Paulo J.A."/>
            <person name="Gygi S.P."/>
            <person name="Martin-Subero J.I."/>
            <person name="Freije J.M.P."/>
            <person name="Lopez-Otin C."/>
        </authorList>
    </citation>
    <scope>UBIQUITINATION</scope>
    <scope>DEUBIQUITINATION BY USP36</scope>
</reference>
<feature type="chain" id="PRO_0000055165" description="ATP-dependent RNA helicase DHX33">
    <location>
        <begin position="1"/>
        <end position="698"/>
    </location>
</feature>
<feature type="domain" description="Helicase ATP-binding" evidence="2">
    <location>
        <begin position="75"/>
        <end position="243"/>
    </location>
</feature>
<feature type="domain" description="Helicase C-terminal" evidence="3">
    <location>
        <begin position="271"/>
        <end position="441"/>
    </location>
</feature>
<feature type="region of interest" description="Required for nucleolar location" evidence="1">
    <location>
        <begin position="1"/>
        <end position="71"/>
    </location>
</feature>
<feature type="region of interest" description="Disordered" evidence="4">
    <location>
        <begin position="1"/>
        <end position="20"/>
    </location>
</feature>
<feature type="region of interest" description="Disordered" evidence="4">
    <location>
        <begin position="29"/>
        <end position="50"/>
    </location>
</feature>
<feature type="region of interest" description="HA2; required for interaction with EIF3G and RPL26" evidence="1">
    <location>
        <begin position="462"/>
        <end position="553"/>
    </location>
</feature>
<feature type="short sequence motif" description="DEAH box">
    <location>
        <begin position="185"/>
        <end position="188"/>
    </location>
</feature>
<feature type="short sequence motif" description="Critical for rDNA-binding">
    <location>
        <begin position="536"/>
        <end position="550"/>
    </location>
</feature>
<feature type="compositionally biased region" description="Gly residues" evidence="4">
    <location>
        <begin position="30"/>
        <end position="40"/>
    </location>
</feature>
<feature type="binding site" evidence="2">
    <location>
        <begin position="88"/>
        <end position="95"/>
    </location>
    <ligand>
        <name>ATP</name>
        <dbReference type="ChEBI" id="CHEBI:30616"/>
    </ligand>
</feature>
<feature type="mutagenesis site" description="Loss of stimulation of rRNA synthesis. Loss of protein synthesis promotion. No effect on interaction with DDX3X, EIF3G, EIF3H and RPL27." evidence="5 7">
    <original>K</original>
    <variation>N</variation>
    <variation>R</variation>
    <location>
        <position position="94"/>
    </location>
</feature>
<feature type="sequence conflict" description="In Ref. 1; BAC28969." evidence="9" ref="1">
    <original>G</original>
    <variation>V</variation>
    <location>
        <position position="470"/>
    </location>
</feature>
<accession>Q80VY9</accession>
<accession>Q8BS50</accession>
<comment type="function">
    <text evidence="1 5 6 7">Implicated in nucleolar organization, ribosome biogenesis, protein synthesis and cytoplasmic dsRNA sensing (By similarity) (PubMed:21930779). Stimulates RNA polymerase I transcription of the 47S precursor rRNA. Associates with ribosomal DNA (rDNA) loci where it is involved in POLR1A recruitment (PubMed:21930779). In the cytoplasm, promotes elongation-competent 80S ribosome assembly at the late stage of mRNA translation initiation (PubMed:26100019). Senses cytosolic dsRNA mediating NLRP3 inflammasome formation in macrophages and type I interferon production in myeloid dendritic cells (By similarity). Required for NLRP3 activation induced by viral dsRNA and bacterial RNA (By similarity). In dendritic cells, required for induction of type I interferon production induced by cytoplasmic dsRNA via the activation of MAPK and NF-kappa-B signaling pathways (PubMed:24037184).</text>
</comment>
<comment type="catalytic activity">
    <reaction>
        <text>ATP + H2O = ADP + phosphate + H(+)</text>
        <dbReference type="Rhea" id="RHEA:13065"/>
        <dbReference type="ChEBI" id="CHEBI:15377"/>
        <dbReference type="ChEBI" id="CHEBI:15378"/>
        <dbReference type="ChEBI" id="CHEBI:30616"/>
        <dbReference type="ChEBI" id="CHEBI:43474"/>
        <dbReference type="ChEBI" id="CHEBI:456216"/>
        <dbReference type="EC" id="3.6.4.13"/>
    </reaction>
</comment>
<comment type="subunit">
    <text evidence="5 6 7">Interacts with UBTF (PubMed:21930779). Interacts with DDX3X, EIF3G and EIF3H; the interaction is independent of RNA (PubMed:26100019). Interacts (via HA2 region and Helicase C-terminal domain) with the components of the large ribosomal subunit RPL3, RPL7, RPL26 and RPL27 (PubMed:26100019). Binds to mRNA (PubMed:26100019). Interacts (via the helicase C-terminal domain) with MAVS (PubMed:24037184). Binds to double-stranded RNA (via the helicase C-terminal domain) (PubMed:24037184).</text>
</comment>
<comment type="subcellular location">
    <subcellularLocation>
        <location evidence="5">Nucleus</location>
        <location evidence="5">Nucleolus</location>
    </subcellularLocation>
    <subcellularLocation>
        <location evidence="1">Nucleus</location>
        <location evidence="1">Nucleoplasm</location>
    </subcellularLocation>
    <subcellularLocation>
        <location evidence="1">Cytoplasm</location>
    </subcellularLocation>
    <subcellularLocation>
        <location evidence="1">Nucleus</location>
    </subcellularLocation>
    <subcellularLocation>
        <location evidence="1">Inflammasome</location>
    </subcellularLocation>
    <text evidence="1">Predominantly in the nucleolus. During mitosis, localizes with the nucleolar organizing regions. Upon dsRNA-binding, localizes in the inflammasome.</text>
</comment>
<comment type="PTM">
    <text evidence="8">Ubiquitinated, leading to its degradation by the proteasome (PubMed:29273634). Deubiquitinated by USP36 (PubMed:29273634).</text>
</comment>
<comment type="similarity">
    <text evidence="9">Belongs to the DEAD box helicase family. DEAH subfamily.</text>
</comment>